<gene>
    <name type="ordered locus">ECU10_1860</name>
</gene>
<keyword id="KW-1185">Reference proteome</keyword>
<dbReference type="EMBL" id="AL590449">
    <property type="protein sequence ID" value="CAD25907.1"/>
    <property type="molecule type" value="Genomic_DNA"/>
</dbReference>
<dbReference type="RefSeq" id="NP_586303.1">
    <property type="nucleotide sequence ID" value="NM_001042136.1"/>
</dbReference>
<dbReference type="GeneID" id="859954"/>
<dbReference type="KEGG" id="ecu:ECU10_1860"/>
<dbReference type="VEuPathDB" id="MicrosporidiaDB:ECU10_1860"/>
<dbReference type="HOGENOM" id="CLU_1266878_0_0_1"/>
<dbReference type="InParanoid" id="Q8SU91"/>
<dbReference type="Proteomes" id="UP000000819">
    <property type="component" value="Chromosome X"/>
</dbReference>
<name>YAI6_ENCCU</name>
<proteinExistence type="inferred from homology"/>
<protein>
    <recommendedName>
        <fullName>UPF0329 protein ECU10_1860</fullName>
    </recommendedName>
</protein>
<accession>Q8SU91</accession>
<feature type="chain" id="PRO_0000223177" description="UPF0329 protein ECU10_1860">
    <location>
        <begin position="1"/>
        <end position="218"/>
    </location>
</feature>
<sequence>MDVCLVDGLWGRRILVGGRKGAVHGCGRQRALEDVKVIGMYSRAGWDIMCLSDGGGGEKLEDGLGWRFSRSKIEMLKGSLEEGGGFRDSDLAPVGCRRKGICFPVGGLLPYLALRSVAYICVFGDSSRAPDLIREAFESPHFKRFDGAGTYKEAKGRCGMRFADVVNGAFGQISDMADKVGKGEPEVWCIWKKRGEVEMLLKVKEYRKGYGSGKRRRR</sequence>
<reference key="1">
    <citation type="journal article" date="2001" name="Nature">
        <title>Genome sequence and gene compaction of the eukaryote parasite Encephalitozoon cuniculi.</title>
        <authorList>
            <person name="Katinka M.D."/>
            <person name="Duprat S."/>
            <person name="Cornillot E."/>
            <person name="Metenier G."/>
            <person name="Thomarat F."/>
            <person name="Prensier G."/>
            <person name="Barbe V."/>
            <person name="Peyretaillade E."/>
            <person name="Brottier P."/>
            <person name="Wincker P."/>
            <person name="Delbac F."/>
            <person name="El Alaoui H."/>
            <person name="Peyret P."/>
            <person name="Saurin W."/>
            <person name="Gouy M."/>
            <person name="Weissenbach J."/>
            <person name="Vivares C.P."/>
        </authorList>
    </citation>
    <scope>NUCLEOTIDE SEQUENCE [LARGE SCALE GENOMIC DNA]</scope>
    <source>
        <strain>GB-M1</strain>
    </source>
</reference>
<comment type="similarity">
    <text evidence="1">Belongs to the UPF0329 family.</text>
</comment>
<organism>
    <name type="scientific">Encephalitozoon cuniculi (strain GB-M1)</name>
    <name type="common">Microsporidian parasite</name>
    <dbReference type="NCBI Taxonomy" id="284813"/>
    <lineage>
        <taxon>Eukaryota</taxon>
        <taxon>Fungi</taxon>
        <taxon>Fungi incertae sedis</taxon>
        <taxon>Microsporidia</taxon>
        <taxon>Unikaryonidae</taxon>
        <taxon>Encephalitozoon</taxon>
    </lineage>
</organism>
<evidence type="ECO:0000305" key="1"/>